<accession>P61435</accession>
<protein>
    <recommendedName>
        <fullName evidence="1">UDP-N-acetylenolpyruvoylglucosamine reductase</fullName>
        <ecNumber evidence="1">1.3.1.98</ecNumber>
    </recommendedName>
    <alternativeName>
        <fullName evidence="1">UDP-N-acetylmuramate dehydrogenase</fullName>
    </alternativeName>
</protein>
<reference key="1">
    <citation type="journal article" date="2003" name="Science">
        <title>Genome of Geobacter sulfurreducens: metal reduction in subsurface environments.</title>
        <authorList>
            <person name="Methe B.A."/>
            <person name="Nelson K.E."/>
            <person name="Eisen J.A."/>
            <person name="Paulsen I.T."/>
            <person name="Nelson W.C."/>
            <person name="Heidelberg J.F."/>
            <person name="Wu D."/>
            <person name="Wu M."/>
            <person name="Ward N.L."/>
            <person name="Beanan M.J."/>
            <person name="Dodson R.J."/>
            <person name="Madupu R."/>
            <person name="Brinkac L.M."/>
            <person name="Daugherty S.C."/>
            <person name="DeBoy R.T."/>
            <person name="Durkin A.S."/>
            <person name="Gwinn M.L."/>
            <person name="Kolonay J.F."/>
            <person name="Sullivan S.A."/>
            <person name="Haft D.H."/>
            <person name="Selengut J."/>
            <person name="Davidsen T.M."/>
            <person name="Zafar N."/>
            <person name="White O."/>
            <person name="Tran B."/>
            <person name="Romero C."/>
            <person name="Forberger H.A."/>
            <person name="Weidman J.F."/>
            <person name="Khouri H.M."/>
            <person name="Feldblyum T.V."/>
            <person name="Utterback T.R."/>
            <person name="Van Aken S.E."/>
            <person name="Lovley D.R."/>
            <person name="Fraser C.M."/>
        </authorList>
    </citation>
    <scope>NUCLEOTIDE SEQUENCE [LARGE SCALE GENOMIC DNA]</scope>
    <source>
        <strain>ATCC 51573 / DSM 12127 / PCA</strain>
    </source>
</reference>
<name>MURB_GEOSL</name>
<keyword id="KW-0131">Cell cycle</keyword>
<keyword id="KW-0132">Cell division</keyword>
<keyword id="KW-0133">Cell shape</keyword>
<keyword id="KW-0961">Cell wall biogenesis/degradation</keyword>
<keyword id="KW-0963">Cytoplasm</keyword>
<keyword id="KW-0274">FAD</keyword>
<keyword id="KW-0285">Flavoprotein</keyword>
<keyword id="KW-0521">NADP</keyword>
<keyword id="KW-0560">Oxidoreductase</keyword>
<keyword id="KW-0573">Peptidoglycan synthesis</keyword>
<keyword id="KW-1185">Reference proteome</keyword>
<evidence type="ECO:0000255" key="1">
    <source>
        <dbReference type="HAMAP-Rule" id="MF_00037"/>
    </source>
</evidence>
<proteinExistence type="inferred from homology"/>
<sequence length="300" mass="31815">MNDRLAARLEAEVRGEILRDEPMARHTSLRVGGPADFFVTPADPDDMRALLAILAETGTPWLAVGGGYNLLIRDGGFRGVVISSARMTSLERLEGNRAVVGAGVANGRLTAFLRNEGLAGLEFLCGIPGTVGGALAMNAGAHGGAILDRVEEILTIGTAGFECKGRELLDYGYRYLKLQPGEIIIGATFVLDSDDPRRISERIDGCRAHRTASQQVGFPNAGSFFKNPPGQAAWRLIEDAGLRGARVGGAQVSEVHTNFLVNRGGATAADFLALAARIKDAVKLKSGTALEEEVKIFGDE</sequence>
<comment type="function">
    <text evidence="1">Cell wall formation.</text>
</comment>
<comment type="catalytic activity">
    <reaction evidence="1">
        <text>UDP-N-acetyl-alpha-D-muramate + NADP(+) = UDP-N-acetyl-3-O-(1-carboxyvinyl)-alpha-D-glucosamine + NADPH + H(+)</text>
        <dbReference type="Rhea" id="RHEA:12248"/>
        <dbReference type="ChEBI" id="CHEBI:15378"/>
        <dbReference type="ChEBI" id="CHEBI:57783"/>
        <dbReference type="ChEBI" id="CHEBI:58349"/>
        <dbReference type="ChEBI" id="CHEBI:68483"/>
        <dbReference type="ChEBI" id="CHEBI:70757"/>
        <dbReference type="EC" id="1.3.1.98"/>
    </reaction>
</comment>
<comment type="cofactor">
    <cofactor evidence="1">
        <name>FAD</name>
        <dbReference type="ChEBI" id="CHEBI:57692"/>
    </cofactor>
</comment>
<comment type="pathway">
    <text evidence="1">Cell wall biogenesis; peptidoglycan biosynthesis.</text>
</comment>
<comment type="subcellular location">
    <subcellularLocation>
        <location evidence="1">Cytoplasm</location>
    </subcellularLocation>
</comment>
<comment type="similarity">
    <text evidence="1">Belongs to the MurB family.</text>
</comment>
<dbReference type="EC" id="1.3.1.98" evidence="1"/>
<dbReference type="EMBL" id="AE017180">
    <property type="protein sequence ID" value="AAR36459.2"/>
    <property type="molecule type" value="Genomic_DNA"/>
</dbReference>
<dbReference type="RefSeq" id="NP_954109.2">
    <property type="nucleotide sequence ID" value="NC_002939.5"/>
</dbReference>
<dbReference type="RefSeq" id="WP_010943692.1">
    <property type="nucleotide sequence ID" value="NC_002939.5"/>
</dbReference>
<dbReference type="SMR" id="P61435"/>
<dbReference type="FunCoup" id="P61435">
    <property type="interactions" value="512"/>
</dbReference>
<dbReference type="STRING" id="243231.GSU3067"/>
<dbReference type="EnsemblBacteria" id="AAR36459">
    <property type="protein sequence ID" value="AAR36459"/>
    <property type="gene ID" value="GSU3067"/>
</dbReference>
<dbReference type="KEGG" id="gsu:GSU3067"/>
<dbReference type="PATRIC" id="fig|243231.5.peg.3090"/>
<dbReference type="eggNOG" id="COG0812">
    <property type="taxonomic scope" value="Bacteria"/>
</dbReference>
<dbReference type="HOGENOM" id="CLU_035304_1_1_7"/>
<dbReference type="InParanoid" id="P61435"/>
<dbReference type="OrthoDB" id="9804753at2"/>
<dbReference type="UniPathway" id="UPA00219"/>
<dbReference type="Proteomes" id="UP000000577">
    <property type="component" value="Chromosome"/>
</dbReference>
<dbReference type="GO" id="GO:0005829">
    <property type="term" value="C:cytosol"/>
    <property type="evidence" value="ECO:0000318"/>
    <property type="project" value="GO_Central"/>
</dbReference>
<dbReference type="GO" id="GO:0071949">
    <property type="term" value="F:FAD binding"/>
    <property type="evidence" value="ECO:0007669"/>
    <property type="project" value="InterPro"/>
</dbReference>
<dbReference type="GO" id="GO:0050660">
    <property type="term" value="F:flavin adenine dinucleotide binding"/>
    <property type="evidence" value="ECO:0000318"/>
    <property type="project" value="GO_Central"/>
</dbReference>
<dbReference type="GO" id="GO:0008762">
    <property type="term" value="F:UDP-N-acetylmuramate dehydrogenase activity"/>
    <property type="evidence" value="ECO:0000318"/>
    <property type="project" value="GO_Central"/>
</dbReference>
<dbReference type="GO" id="GO:0051301">
    <property type="term" value="P:cell division"/>
    <property type="evidence" value="ECO:0007669"/>
    <property type="project" value="UniProtKB-KW"/>
</dbReference>
<dbReference type="GO" id="GO:0071555">
    <property type="term" value="P:cell wall organization"/>
    <property type="evidence" value="ECO:0000318"/>
    <property type="project" value="GO_Central"/>
</dbReference>
<dbReference type="GO" id="GO:0009252">
    <property type="term" value="P:peptidoglycan biosynthetic process"/>
    <property type="evidence" value="ECO:0007669"/>
    <property type="project" value="UniProtKB-UniRule"/>
</dbReference>
<dbReference type="GO" id="GO:0008360">
    <property type="term" value="P:regulation of cell shape"/>
    <property type="evidence" value="ECO:0007669"/>
    <property type="project" value="UniProtKB-KW"/>
</dbReference>
<dbReference type="Gene3D" id="3.30.465.10">
    <property type="match status" value="1"/>
</dbReference>
<dbReference type="Gene3D" id="3.90.78.10">
    <property type="entry name" value="UDP-N-acetylenolpyruvoylglucosamine reductase, C-terminal domain"/>
    <property type="match status" value="1"/>
</dbReference>
<dbReference type="Gene3D" id="3.30.43.10">
    <property type="entry name" value="Uridine Diphospho-n-acetylenolpyruvylglucosamine Reductase, domain 2"/>
    <property type="match status" value="1"/>
</dbReference>
<dbReference type="HAMAP" id="MF_00037">
    <property type="entry name" value="MurB"/>
    <property type="match status" value="1"/>
</dbReference>
<dbReference type="InterPro" id="IPR016166">
    <property type="entry name" value="FAD-bd_PCMH"/>
</dbReference>
<dbReference type="InterPro" id="IPR036318">
    <property type="entry name" value="FAD-bd_PCMH-like_sf"/>
</dbReference>
<dbReference type="InterPro" id="IPR016167">
    <property type="entry name" value="FAD-bd_PCMH_sub1"/>
</dbReference>
<dbReference type="InterPro" id="IPR016169">
    <property type="entry name" value="FAD-bd_PCMH_sub2"/>
</dbReference>
<dbReference type="InterPro" id="IPR003170">
    <property type="entry name" value="MurB"/>
</dbReference>
<dbReference type="InterPro" id="IPR011601">
    <property type="entry name" value="MurB_C"/>
</dbReference>
<dbReference type="InterPro" id="IPR036635">
    <property type="entry name" value="MurB_C_sf"/>
</dbReference>
<dbReference type="InterPro" id="IPR006094">
    <property type="entry name" value="Oxid_FAD_bind_N"/>
</dbReference>
<dbReference type="NCBIfam" id="TIGR00179">
    <property type="entry name" value="murB"/>
    <property type="match status" value="1"/>
</dbReference>
<dbReference type="NCBIfam" id="NF010480">
    <property type="entry name" value="PRK13905.1"/>
    <property type="match status" value="1"/>
</dbReference>
<dbReference type="PANTHER" id="PTHR21071">
    <property type="entry name" value="UDP-N-ACETYLENOLPYRUVOYLGLUCOSAMINE REDUCTASE"/>
    <property type="match status" value="1"/>
</dbReference>
<dbReference type="PANTHER" id="PTHR21071:SF4">
    <property type="entry name" value="UDP-N-ACETYLENOLPYRUVOYLGLUCOSAMINE REDUCTASE"/>
    <property type="match status" value="1"/>
</dbReference>
<dbReference type="Pfam" id="PF01565">
    <property type="entry name" value="FAD_binding_4"/>
    <property type="match status" value="1"/>
</dbReference>
<dbReference type="Pfam" id="PF02873">
    <property type="entry name" value="MurB_C"/>
    <property type="match status" value="1"/>
</dbReference>
<dbReference type="SUPFAM" id="SSF56176">
    <property type="entry name" value="FAD-binding/transporter-associated domain-like"/>
    <property type="match status" value="1"/>
</dbReference>
<dbReference type="SUPFAM" id="SSF56194">
    <property type="entry name" value="Uridine diphospho-N-Acetylenolpyruvylglucosamine reductase, MurB, C-terminal domain"/>
    <property type="match status" value="1"/>
</dbReference>
<dbReference type="PROSITE" id="PS51387">
    <property type="entry name" value="FAD_PCMH"/>
    <property type="match status" value="1"/>
</dbReference>
<gene>
    <name evidence="1" type="primary">murB</name>
    <name type="ordered locus">GSU3067</name>
</gene>
<feature type="chain" id="PRO_0000179212" description="UDP-N-acetylenolpyruvoylglucosamine reductase">
    <location>
        <begin position="1"/>
        <end position="300"/>
    </location>
</feature>
<feature type="domain" description="FAD-binding PCMH-type" evidence="1">
    <location>
        <begin position="30"/>
        <end position="194"/>
    </location>
</feature>
<feature type="active site" evidence="1">
    <location>
        <position position="174"/>
    </location>
</feature>
<feature type="active site" description="Proton donor" evidence="1">
    <location>
        <position position="223"/>
    </location>
</feature>
<feature type="active site" evidence="1">
    <location>
        <position position="293"/>
    </location>
</feature>
<organism>
    <name type="scientific">Geobacter sulfurreducens (strain ATCC 51573 / DSM 12127 / PCA)</name>
    <dbReference type="NCBI Taxonomy" id="243231"/>
    <lineage>
        <taxon>Bacteria</taxon>
        <taxon>Pseudomonadati</taxon>
        <taxon>Thermodesulfobacteriota</taxon>
        <taxon>Desulfuromonadia</taxon>
        <taxon>Geobacterales</taxon>
        <taxon>Geobacteraceae</taxon>
        <taxon>Geobacter</taxon>
    </lineage>
</organism>